<accession>Q1J237</accession>
<evidence type="ECO:0000255" key="1">
    <source>
        <dbReference type="HAMAP-Rule" id="MF_01639"/>
    </source>
</evidence>
<reference key="1">
    <citation type="submission" date="2006-04" db="EMBL/GenBank/DDBJ databases">
        <title>Complete sequence of chromosome of Deinococcus geothermalis DSM 11300.</title>
        <authorList>
            <person name="Copeland A."/>
            <person name="Lucas S."/>
            <person name="Lapidus A."/>
            <person name="Barry K."/>
            <person name="Detter J.C."/>
            <person name="Glavina del Rio T."/>
            <person name="Hammon N."/>
            <person name="Israni S."/>
            <person name="Dalin E."/>
            <person name="Tice H."/>
            <person name="Pitluck S."/>
            <person name="Brettin T."/>
            <person name="Bruce D."/>
            <person name="Han C."/>
            <person name="Tapia R."/>
            <person name="Saunders E."/>
            <person name="Gilna P."/>
            <person name="Schmutz J."/>
            <person name="Larimer F."/>
            <person name="Land M."/>
            <person name="Hauser L."/>
            <person name="Kyrpides N."/>
            <person name="Kim E."/>
            <person name="Daly M.J."/>
            <person name="Fredrickson J.K."/>
            <person name="Makarova K.S."/>
            <person name="Gaidamakova E.K."/>
            <person name="Zhai M."/>
            <person name="Richardson P."/>
        </authorList>
    </citation>
    <scope>NUCLEOTIDE SEQUENCE [LARGE SCALE GENOMIC DNA]</scope>
    <source>
        <strain>DSM 11300 / CIP 105573 / AG-3a</strain>
    </source>
</reference>
<sequence>MTSSSAPVLPQNILSIQSWVSYGHVGNAAALFPLQRLGFEVWTINTVQFSNHTGYGEWTGSVFPPELVADLLNGIAARGVLPTCAAVLSGYMGSEGTVSAVVEAVRRVREANPAALYCCDPVMGDVGRGVFVRPELPDLIRTQAVPEADIVTPNQFELELLTGRRVTRLQEALDASRMLRGTLREGGPRLVVVTSLVREDAPQGVIETLAVTGEGAWLCRTPLLPLDPPRNGTGDAIAALFLGHYLRTQDAGTALSLSMSALFAVLDLTHRVGTREIQLVAAQDEYTRPSRVFEAERVA</sequence>
<gene>
    <name evidence="1" type="primary">pdxY</name>
    <name type="ordered locus">Dgeo_0144</name>
</gene>
<dbReference type="EC" id="2.7.1.35" evidence="1"/>
<dbReference type="EMBL" id="CP000359">
    <property type="protein sequence ID" value="ABF44447.1"/>
    <property type="molecule type" value="Genomic_DNA"/>
</dbReference>
<dbReference type="RefSeq" id="WP_011529294.1">
    <property type="nucleotide sequence ID" value="NC_008025.1"/>
</dbReference>
<dbReference type="SMR" id="Q1J237"/>
<dbReference type="STRING" id="319795.Dgeo_0144"/>
<dbReference type="KEGG" id="dge:Dgeo_0144"/>
<dbReference type="eggNOG" id="COG2240">
    <property type="taxonomic scope" value="Bacteria"/>
</dbReference>
<dbReference type="HOGENOM" id="CLU_046496_3_1_0"/>
<dbReference type="UniPathway" id="UPA01068">
    <property type="reaction ID" value="UER00298"/>
</dbReference>
<dbReference type="Proteomes" id="UP000002431">
    <property type="component" value="Chromosome"/>
</dbReference>
<dbReference type="GO" id="GO:0005829">
    <property type="term" value="C:cytosol"/>
    <property type="evidence" value="ECO:0007669"/>
    <property type="project" value="TreeGrafter"/>
</dbReference>
<dbReference type="GO" id="GO:0005524">
    <property type="term" value="F:ATP binding"/>
    <property type="evidence" value="ECO:0007669"/>
    <property type="project" value="UniProtKB-UniRule"/>
</dbReference>
<dbReference type="GO" id="GO:0000287">
    <property type="term" value="F:magnesium ion binding"/>
    <property type="evidence" value="ECO:0007669"/>
    <property type="project" value="UniProtKB-UniRule"/>
</dbReference>
<dbReference type="GO" id="GO:0008478">
    <property type="term" value="F:pyridoxal kinase activity"/>
    <property type="evidence" value="ECO:0007669"/>
    <property type="project" value="UniProtKB-UniRule"/>
</dbReference>
<dbReference type="GO" id="GO:0009443">
    <property type="term" value="P:pyridoxal 5'-phosphate salvage"/>
    <property type="evidence" value="ECO:0007669"/>
    <property type="project" value="UniProtKB-UniRule"/>
</dbReference>
<dbReference type="CDD" id="cd01173">
    <property type="entry name" value="pyridoxal_pyridoxamine_kinase"/>
    <property type="match status" value="1"/>
</dbReference>
<dbReference type="Gene3D" id="3.40.1190.20">
    <property type="match status" value="1"/>
</dbReference>
<dbReference type="HAMAP" id="MF_01639">
    <property type="entry name" value="PdxY"/>
    <property type="match status" value="1"/>
</dbReference>
<dbReference type="InterPro" id="IPR013749">
    <property type="entry name" value="PM/HMP-P_kinase-1"/>
</dbReference>
<dbReference type="InterPro" id="IPR004625">
    <property type="entry name" value="PyrdxlKinase"/>
</dbReference>
<dbReference type="InterPro" id="IPR023685">
    <property type="entry name" value="Pyridoxal_kinase_PdxY"/>
</dbReference>
<dbReference type="InterPro" id="IPR029056">
    <property type="entry name" value="Ribokinase-like"/>
</dbReference>
<dbReference type="NCBIfam" id="NF004398">
    <property type="entry name" value="PRK05756.1"/>
    <property type="match status" value="1"/>
</dbReference>
<dbReference type="NCBIfam" id="TIGR00687">
    <property type="entry name" value="pyridox_kin"/>
    <property type="match status" value="1"/>
</dbReference>
<dbReference type="PANTHER" id="PTHR10534">
    <property type="entry name" value="PYRIDOXAL KINASE"/>
    <property type="match status" value="1"/>
</dbReference>
<dbReference type="PANTHER" id="PTHR10534:SF2">
    <property type="entry name" value="PYRIDOXAL KINASE"/>
    <property type="match status" value="1"/>
</dbReference>
<dbReference type="Pfam" id="PF08543">
    <property type="entry name" value="Phos_pyr_kin"/>
    <property type="match status" value="1"/>
</dbReference>
<dbReference type="SUPFAM" id="SSF53613">
    <property type="entry name" value="Ribokinase-like"/>
    <property type="match status" value="1"/>
</dbReference>
<organism>
    <name type="scientific">Deinococcus geothermalis (strain DSM 11300 / CIP 105573 / AG-3a)</name>
    <dbReference type="NCBI Taxonomy" id="319795"/>
    <lineage>
        <taxon>Bacteria</taxon>
        <taxon>Thermotogati</taxon>
        <taxon>Deinococcota</taxon>
        <taxon>Deinococci</taxon>
        <taxon>Deinococcales</taxon>
        <taxon>Deinococcaceae</taxon>
        <taxon>Deinococcus</taxon>
    </lineage>
</organism>
<comment type="function">
    <text evidence="1">Pyridoxal kinase involved in the salvage pathway of pyridoxal 5'-phosphate (PLP). Catalyzes the phosphorylation of pyridoxal to PLP.</text>
</comment>
<comment type="catalytic activity">
    <reaction evidence="1">
        <text>pyridoxal + ATP = pyridoxal 5'-phosphate + ADP + H(+)</text>
        <dbReference type="Rhea" id="RHEA:10224"/>
        <dbReference type="ChEBI" id="CHEBI:15378"/>
        <dbReference type="ChEBI" id="CHEBI:17310"/>
        <dbReference type="ChEBI" id="CHEBI:30616"/>
        <dbReference type="ChEBI" id="CHEBI:456216"/>
        <dbReference type="ChEBI" id="CHEBI:597326"/>
        <dbReference type="EC" id="2.7.1.35"/>
    </reaction>
</comment>
<comment type="cofactor">
    <cofactor evidence="1">
        <name>Mg(2+)</name>
        <dbReference type="ChEBI" id="CHEBI:18420"/>
    </cofactor>
</comment>
<comment type="pathway">
    <text evidence="1">Cofactor metabolism; pyridoxal 5'-phosphate salvage; pyridoxal 5'-phosphate from pyridoxal: step 1/1.</text>
</comment>
<comment type="subunit">
    <text evidence="1">Homodimer.</text>
</comment>
<comment type="similarity">
    <text evidence="1">Belongs to the pyridoxine kinase family. PdxY subfamily.</text>
</comment>
<name>PDXY_DEIGD</name>
<protein>
    <recommendedName>
        <fullName evidence="1">Pyridoxal kinase PdxY</fullName>
        <shortName evidence="1">PL kinase</shortName>
        <ecNumber evidence="1">2.7.1.35</ecNumber>
    </recommendedName>
</protein>
<feature type="chain" id="PRO_0000269804" description="Pyridoxal kinase PdxY">
    <location>
        <begin position="1"/>
        <end position="299"/>
    </location>
</feature>
<feature type="binding site" evidence="1">
    <location>
        <position position="18"/>
    </location>
    <ligand>
        <name>substrate</name>
    </ligand>
</feature>
<feature type="binding site" evidence="1">
    <location>
        <position position="120"/>
    </location>
    <ligand>
        <name>ATP</name>
        <dbReference type="ChEBI" id="CHEBI:30616"/>
    </ligand>
</feature>
<feature type="binding site" evidence="1">
    <location>
        <position position="157"/>
    </location>
    <ligand>
        <name>ATP</name>
        <dbReference type="ChEBI" id="CHEBI:30616"/>
    </ligand>
</feature>
<feature type="binding site" evidence="1">
    <location>
        <position position="235"/>
    </location>
    <ligand>
        <name>substrate</name>
    </ligand>
</feature>
<proteinExistence type="inferred from homology"/>
<keyword id="KW-0067">ATP-binding</keyword>
<keyword id="KW-0418">Kinase</keyword>
<keyword id="KW-0460">Magnesium</keyword>
<keyword id="KW-0547">Nucleotide-binding</keyword>
<keyword id="KW-0808">Transferase</keyword>